<comment type="function">
    <text evidence="3 4 6">Hydrolyzes certain amino acid conjugates of the plant growth regulator indole-3-acetic acid (IAA), including IAA-Phe, IAA-Leu and IAA-Tyr (PubMed:10072397, PubMed:11923288, PubMed:7792599). Can also use IAA-Ala, IAA-Gly, IAA-Met and IAA-Glu as substrates with low efficiency (PubMed:10072397, PubMed:11923288, PubMed:7792599). No activity with IAA-Ile, IAA-1-O-beta-D-glucose or IAA-myo-inositol (PubMed:10072397, PubMed:11923288, PubMed:7792599). Is the most efficient enzyme of the ILL family for IAA-Leu hydrolysis (PubMed:11923288). Important for IAA-Leu and IAA-Phe hydrolysis in roots (PubMed:15155875). May act with ILL2 to provide free IAA to germinating seedlings (PubMed:15155875).</text>
</comment>
<comment type="cofactor">
    <cofactor evidence="4 6">
        <name>Mn(2+)</name>
        <dbReference type="ChEBI" id="CHEBI:29035"/>
    </cofactor>
    <cofactor evidence="4 6">
        <name>Cu(2+)</name>
        <dbReference type="ChEBI" id="CHEBI:29036"/>
    </cofactor>
    <cofactor evidence="6">
        <name>Co(2+)</name>
        <dbReference type="ChEBI" id="CHEBI:48828"/>
    </cofactor>
    <text evidence="6">Manganese and/or Cobalt or Copper. The ion enhances activity.</text>
</comment>
<comment type="biophysicochemical properties">
    <kinetics>
        <KM evidence="4">14 uM for IAA-Ala</KM>
        <KM evidence="4">15 uM for IAA-Leu</KM>
        <Vmax evidence="4">14.0 nmol/min/mg enzyme with IAA-Ala as substrate</Vmax>
        <Vmax evidence="4">58.0 nmol/min/mg enzyme with IAA-Leu as substrate</Vmax>
        <text evidence="4">kcat is 0.017 sec(-1) with IAA-Ala as substrate. kcat is 0.070 sec(-1) with IAA-Leu as substrate.</text>
    </kinetics>
    <phDependence>
        <text evidence="4">Optimum pH is 7.5.</text>
    </phDependence>
</comment>
<comment type="tissue specificity">
    <text evidence="5">Expressed in leaves, stems, siliques, seeds and flowers. Detected in central regions of cotyledons, hypocotyl, radicle of mature embryos and seedlings, micropyle of siliques and in pollen.</text>
</comment>
<comment type="similarity">
    <text evidence="8">Belongs to the peptidase M20 family.</text>
</comment>
<dbReference type="EC" id="3.5.1.-" evidence="8"/>
<dbReference type="EMBL" id="U23794">
    <property type="protein sequence ID" value="AAB60293.1"/>
    <property type="molecule type" value="Genomic_DNA"/>
</dbReference>
<dbReference type="EMBL" id="AC018363">
    <property type="protein sequence ID" value="AAF26972.1"/>
    <property type="molecule type" value="Genomic_DNA"/>
</dbReference>
<dbReference type="EMBL" id="CP002686">
    <property type="protein sequence ID" value="AEE73872.1"/>
    <property type="molecule type" value="Genomic_DNA"/>
</dbReference>
<dbReference type="EMBL" id="AY054640">
    <property type="protein sequence ID" value="AAK96831.1"/>
    <property type="molecule type" value="mRNA"/>
</dbReference>
<dbReference type="EMBL" id="AY081499">
    <property type="protein sequence ID" value="AAM10061.1"/>
    <property type="molecule type" value="mRNA"/>
</dbReference>
<dbReference type="RefSeq" id="NP_186937.1">
    <property type="nucleotide sequence ID" value="NM_111156.3"/>
</dbReference>
<dbReference type="SMR" id="P54968"/>
<dbReference type="FunCoup" id="P54968">
    <property type="interactions" value="219"/>
</dbReference>
<dbReference type="STRING" id="3702.P54968"/>
<dbReference type="MEROPS" id="M20.A02"/>
<dbReference type="PaxDb" id="3702-AT3G02875.1"/>
<dbReference type="ProteomicsDB" id="228877"/>
<dbReference type="EnsemblPlants" id="AT3G02875.1">
    <property type="protein sequence ID" value="AT3G02875.1"/>
    <property type="gene ID" value="AT3G02875"/>
</dbReference>
<dbReference type="GeneID" id="821199"/>
<dbReference type="Gramene" id="AT3G02875.1">
    <property type="protein sequence ID" value="AT3G02875.1"/>
    <property type="gene ID" value="AT3G02875"/>
</dbReference>
<dbReference type="KEGG" id="ath:AT3G02875"/>
<dbReference type="Araport" id="AT3G02875"/>
<dbReference type="TAIR" id="AT3G02875">
    <property type="gene designation" value="ILR1"/>
</dbReference>
<dbReference type="eggNOG" id="ENOG502QQEM">
    <property type="taxonomic scope" value="Eukaryota"/>
</dbReference>
<dbReference type="HOGENOM" id="CLU_023257_0_0_1"/>
<dbReference type="InParanoid" id="P54968"/>
<dbReference type="OMA" id="PGFFVWM"/>
<dbReference type="PhylomeDB" id="P54968"/>
<dbReference type="PRO" id="PR:P54968"/>
<dbReference type="Proteomes" id="UP000006548">
    <property type="component" value="Chromosome 3"/>
</dbReference>
<dbReference type="ExpressionAtlas" id="P54968">
    <property type="expression patterns" value="baseline and differential"/>
</dbReference>
<dbReference type="GO" id="GO:0005783">
    <property type="term" value="C:endoplasmic reticulum"/>
    <property type="evidence" value="ECO:0007005"/>
    <property type="project" value="TAIR"/>
</dbReference>
<dbReference type="GO" id="GO:0010211">
    <property type="term" value="F:IAA-Leu conjugate hydrolase activity"/>
    <property type="evidence" value="ECO:0000314"/>
    <property type="project" value="TAIR"/>
</dbReference>
<dbReference type="GO" id="GO:0010210">
    <property type="term" value="F:IAA-Phe conjugate hydrolase activity"/>
    <property type="evidence" value="ECO:0000314"/>
    <property type="project" value="TAIR"/>
</dbReference>
<dbReference type="GO" id="GO:0046872">
    <property type="term" value="F:metal ion binding"/>
    <property type="evidence" value="ECO:0007669"/>
    <property type="project" value="UniProtKB-KW"/>
</dbReference>
<dbReference type="GO" id="GO:0009850">
    <property type="term" value="P:auxin metabolic process"/>
    <property type="evidence" value="ECO:0000315"/>
    <property type="project" value="TAIR"/>
</dbReference>
<dbReference type="CDD" id="cd08017">
    <property type="entry name" value="M20_IAA_Hyd"/>
    <property type="match status" value="1"/>
</dbReference>
<dbReference type="FunFam" id="3.30.70.360:FF:000001">
    <property type="entry name" value="N-acetyldiaminopimelate deacetylase"/>
    <property type="match status" value="1"/>
</dbReference>
<dbReference type="Gene3D" id="3.30.70.360">
    <property type="match status" value="1"/>
</dbReference>
<dbReference type="Gene3D" id="3.40.630.10">
    <property type="entry name" value="Zn peptidases"/>
    <property type="match status" value="1"/>
</dbReference>
<dbReference type="InterPro" id="IPR017439">
    <property type="entry name" value="Amidohydrolase"/>
</dbReference>
<dbReference type="InterPro" id="IPR036264">
    <property type="entry name" value="Bact_exopeptidase_dim_dom"/>
</dbReference>
<dbReference type="InterPro" id="IPR044757">
    <property type="entry name" value="ILR1-like_Hyd"/>
</dbReference>
<dbReference type="InterPro" id="IPR002933">
    <property type="entry name" value="Peptidase_M20"/>
</dbReference>
<dbReference type="InterPro" id="IPR011650">
    <property type="entry name" value="Peptidase_M20_dimer"/>
</dbReference>
<dbReference type="NCBIfam" id="TIGR01891">
    <property type="entry name" value="amidohydrolases"/>
    <property type="match status" value="1"/>
</dbReference>
<dbReference type="PANTHER" id="PTHR11014:SF108">
    <property type="entry name" value="IAA-AMINO ACID HYDROLASE ILR1"/>
    <property type="match status" value="1"/>
</dbReference>
<dbReference type="PANTHER" id="PTHR11014">
    <property type="entry name" value="PEPTIDASE M20 FAMILY MEMBER"/>
    <property type="match status" value="1"/>
</dbReference>
<dbReference type="Pfam" id="PF07687">
    <property type="entry name" value="M20_dimer"/>
    <property type="match status" value="1"/>
</dbReference>
<dbReference type="Pfam" id="PF01546">
    <property type="entry name" value="Peptidase_M20"/>
    <property type="match status" value="1"/>
</dbReference>
<dbReference type="PIRSF" id="PIRSF005962">
    <property type="entry name" value="Pept_M20D_amidohydro"/>
    <property type="match status" value="1"/>
</dbReference>
<dbReference type="SUPFAM" id="SSF55031">
    <property type="entry name" value="Bacterial exopeptidase dimerisation domain"/>
    <property type="match status" value="1"/>
</dbReference>
<dbReference type="SUPFAM" id="SSF53187">
    <property type="entry name" value="Zn-dependent exopeptidases"/>
    <property type="match status" value="1"/>
</dbReference>
<gene>
    <name evidence="7" type="primary">ILR1</name>
    <name evidence="9" type="ordered locus">At3g02875</name>
    <name evidence="10" type="ORF">F13E7.18</name>
</gene>
<feature type="signal peptide" evidence="2">
    <location>
        <begin position="1"/>
        <end position="23"/>
    </location>
</feature>
<feature type="chain" id="PRO_0000045468" description="IAA-amino acid hydrolase ILR1">
    <location>
        <begin position="24"/>
        <end position="442"/>
    </location>
</feature>
<feature type="binding site" evidence="1">
    <location>
        <position position="138"/>
    </location>
    <ligand>
        <name>Mn(2+)</name>
        <dbReference type="ChEBI" id="CHEBI:29035"/>
        <label>1</label>
    </ligand>
</feature>
<feature type="binding site" evidence="1">
    <location>
        <position position="138"/>
    </location>
    <ligand>
        <name>Mn(2+)</name>
        <dbReference type="ChEBI" id="CHEBI:29035"/>
        <label>2</label>
    </ligand>
</feature>
<feature type="binding site" evidence="1">
    <location>
        <position position="140"/>
    </location>
    <ligand>
        <name>Mn(2+)</name>
        <dbReference type="ChEBI" id="CHEBI:29035"/>
        <label>2</label>
    </ligand>
</feature>
<feature type="binding site" evidence="1">
    <location>
        <position position="174"/>
    </location>
    <ligand>
        <name>Mn(2+)</name>
        <dbReference type="ChEBI" id="CHEBI:29035"/>
        <label>1</label>
    </ligand>
</feature>
<feature type="binding site" evidence="1">
    <location>
        <position position="198"/>
    </location>
    <ligand>
        <name>Mn(2+)</name>
        <dbReference type="ChEBI" id="CHEBI:29035"/>
        <label>2</label>
    </ligand>
</feature>
<feature type="binding site" evidence="1">
    <location>
        <position position="401"/>
    </location>
    <ligand>
        <name>Mn(2+)</name>
        <dbReference type="ChEBI" id="CHEBI:29035"/>
        <label>1</label>
    </ligand>
</feature>
<feature type="mutagenesis site" description="In ilr1-3." evidence="6">
    <original>E</original>
    <variation>K</variation>
    <location>
        <position position="69"/>
    </location>
</feature>
<feature type="mutagenesis site" description="In ilr1-1." evidence="6">
    <original>G</original>
    <variation>D</variation>
    <location>
        <position position="139"/>
    </location>
</feature>
<feature type="mutagenesis site" description="In ilr1-2." evidence="6">
    <original>G</original>
    <variation>E</variation>
    <location>
        <position position="415"/>
    </location>
</feature>
<feature type="sequence conflict" description="In Ref. 1; AAB60293." evidence="8" ref="1">
    <original>S</original>
    <variation>R</variation>
    <location>
        <position position="6"/>
    </location>
</feature>
<feature type="sequence conflict" description="In Ref. 1; AAB60293." evidence="8" ref="1">
    <original>H</original>
    <variation>Y</variation>
    <location>
        <position position="143"/>
    </location>
</feature>
<feature type="sequence conflict" description="In Ref. 1; AAB60293." evidence="8" ref="1">
    <original>V</original>
    <variation>I</variation>
    <location>
        <position position="389"/>
    </location>
</feature>
<proteinExistence type="evidence at protein level"/>
<protein>
    <recommendedName>
        <fullName evidence="7">IAA-amino acid hydrolase ILR1</fullName>
        <ecNumber evidence="8">3.5.1.-</ecNumber>
    </recommendedName>
</protein>
<reference key="1">
    <citation type="journal article" date="1995" name="Science">
        <title>ILR1, an amidohydrolase that releases active indole-3-acetic acid from conjugates.</title>
        <authorList>
            <person name="Bartel B."/>
            <person name="Fink G.R."/>
        </authorList>
    </citation>
    <scope>NUCLEOTIDE SEQUENCE [GENOMIC DNA]</scope>
    <scope>MUTAGENESIS OF GLU-69; GLY-139 AND GLY-415</scope>
    <scope>FUNCTION</scope>
    <scope>SUBSTRATE SPECIFICITY</scope>
    <scope>COFACTOR</scope>
    <source>
        <strain>cv. Wassilewskija</strain>
    </source>
</reference>
<reference key="2">
    <citation type="journal article" date="2000" name="Nature">
        <title>Sequence and analysis of chromosome 3 of the plant Arabidopsis thaliana.</title>
        <authorList>
            <person name="Salanoubat M."/>
            <person name="Lemcke K."/>
            <person name="Rieger M."/>
            <person name="Ansorge W."/>
            <person name="Unseld M."/>
            <person name="Fartmann B."/>
            <person name="Valle G."/>
            <person name="Bloecker H."/>
            <person name="Perez-Alonso M."/>
            <person name="Obermaier B."/>
            <person name="Delseny M."/>
            <person name="Boutry M."/>
            <person name="Grivell L.A."/>
            <person name="Mache R."/>
            <person name="Puigdomenech P."/>
            <person name="De Simone V."/>
            <person name="Choisne N."/>
            <person name="Artiguenave F."/>
            <person name="Robert C."/>
            <person name="Brottier P."/>
            <person name="Wincker P."/>
            <person name="Cattolico L."/>
            <person name="Weissenbach J."/>
            <person name="Saurin W."/>
            <person name="Quetier F."/>
            <person name="Schaefer M."/>
            <person name="Mueller-Auer S."/>
            <person name="Gabel C."/>
            <person name="Fuchs M."/>
            <person name="Benes V."/>
            <person name="Wurmbach E."/>
            <person name="Drzonek H."/>
            <person name="Erfle H."/>
            <person name="Jordan N."/>
            <person name="Bangert S."/>
            <person name="Wiedelmann R."/>
            <person name="Kranz H."/>
            <person name="Voss H."/>
            <person name="Holland R."/>
            <person name="Brandt P."/>
            <person name="Nyakatura G."/>
            <person name="Vezzi A."/>
            <person name="D'Angelo M."/>
            <person name="Pallavicini A."/>
            <person name="Toppo S."/>
            <person name="Simionati B."/>
            <person name="Conrad A."/>
            <person name="Hornischer K."/>
            <person name="Kauer G."/>
            <person name="Loehnert T.-H."/>
            <person name="Nordsiek G."/>
            <person name="Reichelt J."/>
            <person name="Scharfe M."/>
            <person name="Schoen O."/>
            <person name="Bargues M."/>
            <person name="Terol J."/>
            <person name="Climent J."/>
            <person name="Navarro P."/>
            <person name="Collado C."/>
            <person name="Perez-Perez A."/>
            <person name="Ottenwaelder B."/>
            <person name="Duchemin D."/>
            <person name="Cooke R."/>
            <person name="Laudie M."/>
            <person name="Berger-Llauro C."/>
            <person name="Purnelle B."/>
            <person name="Masuy D."/>
            <person name="de Haan M."/>
            <person name="Maarse A.C."/>
            <person name="Alcaraz J.-P."/>
            <person name="Cottet A."/>
            <person name="Casacuberta E."/>
            <person name="Monfort A."/>
            <person name="Argiriou A."/>
            <person name="Flores M."/>
            <person name="Liguori R."/>
            <person name="Vitale D."/>
            <person name="Mannhaupt G."/>
            <person name="Haase D."/>
            <person name="Schoof H."/>
            <person name="Rudd S."/>
            <person name="Zaccaria P."/>
            <person name="Mewes H.-W."/>
            <person name="Mayer K.F.X."/>
            <person name="Kaul S."/>
            <person name="Town C.D."/>
            <person name="Koo H.L."/>
            <person name="Tallon L.J."/>
            <person name="Jenkins J."/>
            <person name="Rooney T."/>
            <person name="Rizzo M."/>
            <person name="Walts A."/>
            <person name="Utterback T."/>
            <person name="Fujii C.Y."/>
            <person name="Shea T.P."/>
            <person name="Creasy T.H."/>
            <person name="Haas B."/>
            <person name="Maiti R."/>
            <person name="Wu D."/>
            <person name="Peterson J."/>
            <person name="Van Aken S."/>
            <person name="Pai G."/>
            <person name="Militscher J."/>
            <person name="Sellers P."/>
            <person name="Gill J.E."/>
            <person name="Feldblyum T.V."/>
            <person name="Preuss D."/>
            <person name="Lin X."/>
            <person name="Nierman W.C."/>
            <person name="Salzberg S.L."/>
            <person name="White O."/>
            <person name="Venter J.C."/>
            <person name="Fraser C.M."/>
            <person name="Kaneko T."/>
            <person name="Nakamura Y."/>
            <person name="Sato S."/>
            <person name="Kato T."/>
            <person name="Asamizu E."/>
            <person name="Sasamoto S."/>
            <person name="Kimura T."/>
            <person name="Idesawa K."/>
            <person name="Kawashima K."/>
            <person name="Kishida Y."/>
            <person name="Kiyokawa C."/>
            <person name="Kohara M."/>
            <person name="Matsumoto M."/>
            <person name="Matsuno A."/>
            <person name="Muraki A."/>
            <person name="Nakayama S."/>
            <person name="Nakazaki N."/>
            <person name="Shinpo S."/>
            <person name="Takeuchi C."/>
            <person name="Wada T."/>
            <person name="Watanabe A."/>
            <person name="Yamada M."/>
            <person name="Yasuda M."/>
            <person name="Tabata S."/>
        </authorList>
    </citation>
    <scope>NUCLEOTIDE SEQUENCE [LARGE SCALE GENOMIC DNA]</scope>
    <source>
        <strain>cv. Columbia</strain>
    </source>
</reference>
<reference key="3">
    <citation type="journal article" date="2017" name="Plant J.">
        <title>Araport11: a complete reannotation of the Arabidopsis thaliana reference genome.</title>
        <authorList>
            <person name="Cheng C.Y."/>
            <person name="Krishnakumar V."/>
            <person name="Chan A.P."/>
            <person name="Thibaud-Nissen F."/>
            <person name="Schobel S."/>
            <person name="Town C.D."/>
        </authorList>
    </citation>
    <scope>GENOME REANNOTATION</scope>
    <source>
        <strain>cv. Columbia</strain>
    </source>
</reference>
<reference key="4">
    <citation type="journal article" date="2003" name="Science">
        <title>Empirical analysis of transcriptional activity in the Arabidopsis genome.</title>
        <authorList>
            <person name="Yamada K."/>
            <person name="Lim J."/>
            <person name="Dale J.M."/>
            <person name="Chen H."/>
            <person name="Shinn P."/>
            <person name="Palm C.J."/>
            <person name="Southwick A.M."/>
            <person name="Wu H.C."/>
            <person name="Kim C.J."/>
            <person name="Nguyen M."/>
            <person name="Pham P.K."/>
            <person name="Cheuk R.F."/>
            <person name="Karlin-Newmann G."/>
            <person name="Liu S.X."/>
            <person name="Lam B."/>
            <person name="Sakano H."/>
            <person name="Wu T."/>
            <person name="Yu G."/>
            <person name="Miranda M."/>
            <person name="Quach H.L."/>
            <person name="Tripp M."/>
            <person name="Chang C.H."/>
            <person name="Lee J.M."/>
            <person name="Toriumi M.J."/>
            <person name="Chan M.M."/>
            <person name="Tang C.C."/>
            <person name="Onodera C.S."/>
            <person name="Deng J.M."/>
            <person name="Akiyama K."/>
            <person name="Ansari Y."/>
            <person name="Arakawa T."/>
            <person name="Banh J."/>
            <person name="Banno F."/>
            <person name="Bowser L."/>
            <person name="Brooks S.Y."/>
            <person name="Carninci P."/>
            <person name="Chao Q."/>
            <person name="Choy N."/>
            <person name="Enju A."/>
            <person name="Goldsmith A.D."/>
            <person name="Gurjal M."/>
            <person name="Hansen N.F."/>
            <person name="Hayashizaki Y."/>
            <person name="Johnson-Hopson C."/>
            <person name="Hsuan V.W."/>
            <person name="Iida K."/>
            <person name="Karnes M."/>
            <person name="Khan S."/>
            <person name="Koesema E."/>
            <person name="Ishida J."/>
            <person name="Jiang P.X."/>
            <person name="Jones T."/>
            <person name="Kawai J."/>
            <person name="Kamiya A."/>
            <person name="Meyers C."/>
            <person name="Nakajima M."/>
            <person name="Narusaka M."/>
            <person name="Seki M."/>
            <person name="Sakurai T."/>
            <person name="Satou M."/>
            <person name="Tamse R."/>
            <person name="Vaysberg M."/>
            <person name="Wallender E.K."/>
            <person name="Wong C."/>
            <person name="Yamamura Y."/>
            <person name="Yuan S."/>
            <person name="Shinozaki K."/>
            <person name="Davis R.W."/>
            <person name="Theologis A."/>
            <person name="Ecker J.R."/>
        </authorList>
    </citation>
    <scope>NUCLEOTIDE SEQUENCE [LARGE SCALE MRNA]</scope>
    <source>
        <strain>cv. Columbia</strain>
    </source>
</reference>
<reference key="5">
    <citation type="journal article" date="1999" name="Plant Cell">
        <title>IAR3 encodes an auxin conjugate hydrolase from Arabidopsis.</title>
        <authorList>
            <person name="Davies R.T."/>
            <person name="Goetz D.H."/>
            <person name="Lasswell J.E."/>
            <person name="Anderson M.N."/>
            <person name="Bartel B."/>
        </authorList>
    </citation>
    <scope>FUNCTION</scope>
    <scope>SUBSTRATE SPECIFICITY</scope>
    <source>
        <strain>cv. Columbia</strain>
    </source>
</reference>
<reference key="6">
    <citation type="journal article" date="2002" name="J. Biol. Chem.">
        <title>Characterization of a family of IAA-amino acid conjugate hydrolases from Arabidopsis.</title>
        <authorList>
            <person name="LeClere S."/>
            <person name="Tellez R."/>
            <person name="Rampey R.A."/>
            <person name="Matsuda S.P.T."/>
            <person name="Bartel B."/>
        </authorList>
    </citation>
    <scope>GENE FAMILY</scope>
    <scope>FUNCTION</scope>
    <scope>BIOPHYSICOCHEMICAL PROPERTIES</scope>
    <scope>COFACTOR</scope>
    <scope>SUBSTRATE SPECIFICITY</scope>
</reference>
<reference key="7">
    <citation type="journal article" date="2004" name="Plant Physiol.">
        <title>A family of auxin-conjugate hydrolases that contributes to free indole-3-acetic acid levels during Arabidopsis germination.</title>
        <authorList>
            <person name="Rampey R.A."/>
            <person name="LeClere S."/>
            <person name="Kowalczyk M."/>
            <person name="Ljung K."/>
            <person name="Sandberg G."/>
            <person name="Bartel B."/>
        </authorList>
    </citation>
    <scope>FUNCTION</scope>
    <scope>TISSUE SPECIFICITY</scope>
</reference>
<evidence type="ECO:0000250" key="1">
    <source>
        <dbReference type="UniProtKB" id="P54970"/>
    </source>
</evidence>
<evidence type="ECO:0000255" key="2"/>
<evidence type="ECO:0000269" key="3">
    <source>
    </source>
</evidence>
<evidence type="ECO:0000269" key="4">
    <source>
    </source>
</evidence>
<evidence type="ECO:0000269" key="5">
    <source>
    </source>
</evidence>
<evidence type="ECO:0000269" key="6">
    <source>
    </source>
</evidence>
<evidence type="ECO:0000303" key="7">
    <source>
    </source>
</evidence>
<evidence type="ECO:0000305" key="8"/>
<evidence type="ECO:0000312" key="9">
    <source>
        <dbReference type="Araport" id="AT3G02875"/>
    </source>
</evidence>
<evidence type="ECO:0000312" key="10">
    <source>
        <dbReference type="EMBL" id="AAF26972.1"/>
    </source>
</evidence>
<name>ILR1_ARATH</name>
<sequence>MDFSGSFFVIFVTFFFLPPLSSAGSYDSGSGLESLARGMLHSAKDPEFFEWMRGIRRKIHENPETGFQEFKTSQLVRDELDSLGVKYKYPVAKTGVVAWIGSCSKPVFGLRADMDALPLQELVEWESKSKVDGKMHACGHDTHVAMLLGAAKLLQTTKHLIKGTVKLVFQPGEEGYAGAYEMLKDEILDDLDGILSVHVFPSIPSGGIGSRPGTVLAGAGLFTVTVHGQGSHAATPHFSKDPVLAASSAVVALQQIVSRELDPLEAGVVTVGYIEGGHAQNVIPQSAKFGGTFRSLSNDGLLFIQRRIKEISEAQASVYRCKAEVNFEEKKPSLHPVMNNDEGLYEHGKKVAEAMIGKNNFHDFPVTMGGEDFSFFTQKTKAAIFVLGVKNETLGAGKPLHSPYFFVDEEALPVGAALHAAMAVSYLDEHGHSHEEEVKSEL</sequence>
<organism>
    <name type="scientific">Arabidopsis thaliana</name>
    <name type="common">Mouse-ear cress</name>
    <dbReference type="NCBI Taxonomy" id="3702"/>
    <lineage>
        <taxon>Eukaryota</taxon>
        <taxon>Viridiplantae</taxon>
        <taxon>Streptophyta</taxon>
        <taxon>Embryophyta</taxon>
        <taxon>Tracheophyta</taxon>
        <taxon>Spermatophyta</taxon>
        <taxon>Magnoliopsida</taxon>
        <taxon>eudicotyledons</taxon>
        <taxon>Gunneridae</taxon>
        <taxon>Pentapetalae</taxon>
        <taxon>rosids</taxon>
        <taxon>malvids</taxon>
        <taxon>Brassicales</taxon>
        <taxon>Brassicaceae</taxon>
        <taxon>Camelineae</taxon>
        <taxon>Arabidopsis</taxon>
    </lineage>
</organism>
<keyword id="KW-0170">Cobalt</keyword>
<keyword id="KW-0378">Hydrolase</keyword>
<keyword id="KW-0464">Manganese</keyword>
<keyword id="KW-0479">Metal-binding</keyword>
<keyword id="KW-1185">Reference proteome</keyword>
<keyword id="KW-0732">Signal</keyword>
<accession>P54968</accession>
<accession>Q9M8S9</accession>